<proteinExistence type="inferred from homology"/>
<protein>
    <recommendedName>
        <fullName evidence="2">Probable 4-amino-4-deoxy-L-arabinose-phosphoundecaprenol flippase subunit ArnE</fullName>
        <shortName evidence="2">L-Ara4N-phosphoundecaprenol flippase subunit ArnE</shortName>
    </recommendedName>
    <alternativeName>
        <fullName evidence="2">Undecaprenyl phosphate-aminoarabinose flippase subunit ArnE</fullName>
    </alternativeName>
</protein>
<comment type="function">
    <text evidence="2">Translocates 4-amino-4-deoxy-L-arabinose-phosphoundecaprenol (alpha-L-Ara4N-phosphoundecaprenol) from the cytoplasmic to the periplasmic side of the inner membrane.</text>
</comment>
<comment type="pathway">
    <text evidence="2">Bacterial outer membrane biogenesis; lipopolysaccharide biosynthesis.</text>
</comment>
<comment type="subunit">
    <text evidence="2">Heterodimer of ArnE and ArnF.</text>
</comment>
<comment type="subcellular location">
    <subcellularLocation>
        <location evidence="2">Cell inner membrane</location>
        <topology evidence="2">Multi-pass membrane protein</topology>
    </subcellularLocation>
</comment>
<comment type="similarity">
    <text evidence="2">Belongs to the ArnE family.</text>
</comment>
<gene>
    <name evidence="2" type="primary">arnE</name>
    <name type="ordered locus">ECIAI39_2405</name>
</gene>
<organism>
    <name type="scientific">Escherichia coli O7:K1 (strain IAI39 / ExPEC)</name>
    <dbReference type="NCBI Taxonomy" id="585057"/>
    <lineage>
        <taxon>Bacteria</taxon>
        <taxon>Pseudomonadati</taxon>
        <taxon>Pseudomonadota</taxon>
        <taxon>Gammaproteobacteria</taxon>
        <taxon>Enterobacterales</taxon>
        <taxon>Enterobacteriaceae</taxon>
        <taxon>Escherichia</taxon>
    </lineage>
</organism>
<name>ARNE_ECO7I</name>
<accession>B7NNT7</accession>
<dbReference type="EMBL" id="CU928164">
    <property type="protein sequence ID" value="CAR18531.1"/>
    <property type="molecule type" value="Genomic_DNA"/>
</dbReference>
<dbReference type="RefSeq" id="WP_000638031.1">
    <property type="nucleotide sequence ID" value="NC_011750.1"/>
</dbReference>
<dbReference type="RefSeq" id="YP_002408361.1">
    <property type="nucleotide sequence ID" value="NC_011750.1"/>
</dbReference>
<dbReference type="SMR" id="B7NNT7"/>
<dbReference type="STRING" id="585057.ECIAI39_2405"/>
<dbReference type="GeneID" id="93774916"/>
<dbReference type="KEGG" id="ect:ECIAI39_2405"/>
<dbReference type="PATRIC" id="fig|585057.6.peg.2507"/>
<dbReference type="HOGENOM" id="CLU_131462_5_1_6"/>
<dbReference type="UniPathway" id="UPA00030"/>
<dbReference type="Proteomes" id="UP000000749">
    <property type="component" value="Chromosome"/>
</dbReference>
<dbReference type="GO" id="GO:0005886">
    <property type="term" value="C:plasma membrane"/>
    <property type="evidence" value="ECO:0007669"/>
    <property type="project" value="UniProtKB-SubCell"/>
</dbReference>
<dbReference type="GO" id="GO:1901505">
    <property type="term" value="F:carbohydrate derivative transmembrane transporter activity"/>
    <property type="evidence" value="ECO:0007669"/>
    <property type="project" value="InterPro"/>
</dbReference>
<dbReference type="GO" id="GO:0009245">
    <property type="term" value="P:lipid A biosynthetic process"/>
    <property type="evidence" value="ECO:0007669"/>
    <property type="project" value="UniProtKB-UniRule"/>
</dbReference>
<dbReference type="GO" id="GO:0009103">
    <property type="term" value="P:lipopolysaccharide biosynthetic process"/>
    <property type="evidence" value="ECO:0007669"/>
    <property type="project" value="UniProtKB-UniRule"/>
</dbReference>
<dbReference type="FunFam" id="1.10.3730.20:FF:000002">
    <property type="entry name" value="Probable 4-amino-4-deoxy-L-arabinose-phosphoundecaprenol flippase subunit ArnE"/>
    <property type="match status" value="1"/>
</dbReference>
<dbReference type="Gene3D" id="1.10.3730.20">
    <property type="match status" value="1"/>
</dbReference>
<dbReference type="HAMAP" id="MF_01869">
    <property type="entry name" value="Flippase_ArnE"/>
    <property type="match status" value="1"/>
</dbReference>
<dbReference type="InterPro" id="IPR000620">
    <property type="entry name" value="EamA_dom"/>
</dbReference>
<dbReference type="InterPro" id="IPR022883">
    <property type="entry name" value="Flippase_ArnE"/>
</dbReference>
<dbReference type="InterPro" id="IPR000390">
    <property type="entry name" value="Small_drug/metabolite_transptr"/>
</dbReference>
<dbReference type="NCBIfam" id="NF011625">
    <property type="entry name" value="PRK15051.1"/>
    <property type="match status" value="1"/>
</dbReference>
<dbReference type="PANTHER" id="PTHR30561:SF23">
    <property type="entry name" value="4-AMINO-4-DEOXY-L-ARABINOSE-PHOSPHOUNDECAPRENOL FLIPPASE SUBUNIT ARNE-RELATED"/>
    <property type="match status" value="1"/>
</dbReference>
<dbReference type="PANTHER" id="PTHR30561">
    <property type="entry name" value="SMR FAMILY PROTON-DEPENDENT DRUG EFFLUX TRANSPORTER SUGE"/>
    <property type="match status" value="1"/>
</dbReference>
<dbReference type="Pfam" id="PF00892">
    <property type="entry name" value="EamA"/>
    <property type="match status" value="1"/>
</dbReference>
<dbReference type="SUPFAM" id="SSF103481">
    <property type="entry name" value="Multidrug resistance efflux transporter EmrE"/>
    <property type="match status" value="1"/>
</dbReference>
<reference key="1">
    <citation type="journal article" date="2009" name="PLoS Genet.">
        <title>Organised genome dynamics in the Escherichia coli species results in highly diverse adaptive paths.</title>
        <authorList>
            <person name="Touchon M."/>
            <person name="Hoede C."/>
            <person name="Tenaillon O."/>
            <person name="Barbe V."/>
            <person name="Baeriswyl S."/>
            <person name="Bidet P."/>
            <person name="Bingen E."/>
            <person name="Bonacorsi S."/>
            <person name="Bouchier C."/>
            <person name="Bouvet O."/>
            <person name="Calteau A."/>
            <person name="Chiapello H."/>
            <person name="Clermont O."/>
            <person name="Cruveiller S."/>
            <person name="Danchin A."/>
            <person name="Diard M."/>
            <person name="Dossat C."/>
            <person name="Karoui M.E."/>
            <person name="Frapy E."/>
            <person name="Garry L."/>
            <person name="Ghigo J.M."/>
            <person name="Gilles A.M."/>
            <person name="Johnson J."/>
            <person name="Le Bouguenec C."/>
            <person name="Lescat M."/>
            <person name="Mangenot S."/>
            <person name="Martinez-Jehanne V."/>
            <person name="Matic I."/>
            <person name="Nassif X."/>
            <person name="Oztas S."/>
            <person name="Petit M.A."/>
            <person name="Pichon C."/>
            <person name="Rouy Z."/>
            <person name="Ruf C.S."/>
            <person name="Schneider D."/>
            <person name="Tourret J."/>
            <person name="Vacherie B."/>
            <person name="Vallenet D."/>
            <person name="Medigue C."/>
            <person name="Rocha E.P.C."/>
            <person name="Denamur E."/>
        </authorList>
    </citation>
    <scope>NUCLEOTIDE SEQUENCE [LARGE SCALE GENOMIC DNA]</scope>
    <source>
        <strain>IAI39 / ExPEC</strain>
    </source>
</reference>
<feature type="chain" id="PRO_0000382971" description="Probable 4-amino-4-deoxy-L-arabinose-phosphoundecaprenol flippase subunit ArnE">
    <location>
        <begin position="1"/>
        <end position="111"/>
    </location>
</feature>
<feature type="topological domain" description="Cytoplasmic" evidence="1">
    <location>
        <begin position="1"/>
        <end position="35"/>
    </location>
</feature>
<feature type="transmembrane region" description="Helical" evidence="2">
    <location>
        <begin position="36"/>
        <end position="56"/>
    </location>
</feature>
<feature type="topological domain" description="Periplasmic" evidence="1">
    <location>
        <begin position="57"/>
        <end position="60"/>
    </location>
</feature>
<feature type="transmembrane region" description="Helical" evidence="2">
    <location>
        <begin position="61"/>
        <end position="81"/>
    </location>
</feature>
<feature type="topological domain" description="Cytoplasmic" evidence="1">
    <location>
        <begin position="82"/>
        <end position="87"/>
    </location>
</feature>
<feature type="transmembrane region" description="Helical" evidence="2">
    <location>
        <begin position="88"/>
        <end position="108"/>
    </location>
</feature>
<feature type="topological domain" description="Periplasmic" evidence="1">
    <location>
        <begin position="109"/>
        <end position="111"/>
    </location>
</feature>
<feature type="domain" description="EamA" evidence="2">
    <location>
        <begin position="40"/>
        <end position="109"/>
    </location>
</feature>
<evidence type="ECO:0000255" key="1"/>
<evidence type="ECO:0000255" key="2">
    <source>
        <dbReference type="HAMAP-Rule" id="MF_01869"/>
    </source>
</evidence>
<keyword id="KW-0997">Cell inner membrane</keyword>
<keyword id="KW-1003">Cell membrane</keyword>
<keyword id="KW-0441">Lipid A biosynthesis</keyword>
<keyword id="KW-0444">Lipid biosynthesis</keyword>
<keyword id="KW-0443">Lipid metabolism</keyword>
<keyword id="KW-0448">Lipopolysaccharide biosynthesis</keyword>
<keyword id="KW-0472">Membrane</keyword>
<keyword id="KW-0812">Transmembrane</keyword>
<keyword id="KW-1133">Transmembrane helix</keyword>
<keyword id="KW-0813">Transport</keyword>
<sequence length="111" mass="12192">MIWLTLVFASLLSVAGQLCQKQATCFVAINKRRKHIVLWLGLALACLGLAMVLWLLVLQNVPVGIAYPMLSLNFVWVTLAAVKLWHEPVSPRHWCGVAFIIGGIVILGSTV</sequence>